<proteinExistence type="inferred from homology"/>
<sequence>VKRPMNAFMVWSQNERRKIMDQWPDMHNAEISKSLGRSSQLLQDSEKIPFVKEAGRLRLKHMADYPNYKYRP</sequence>
<dbReference type="EMBL" id="M86339">
    <property type="protein sequence ID" value="AAA49623.1"/>
    <property type="molecule type" value="Genomic_DNA"/>
</dbReference>
<dbReference type="PIR" id="I51371">
    <property type="entry name" value="I51371"/>
</dbReference>
<dbReference type="SMR" id="P40653"/>
<dbReference type="GO" id="GO:0005634">
    <property type="term" value="C:nucleus"/>
    <property type="evidence" value="ECO:0007669"/>
    <property type="project" value="UniProtKB-SubCell"/>
</dbReference>
<dbReference type="GO" id="GO:0001228">
    <property type="term" value="F:DNA-binding transcription activator activity, RNA polymerase II-specific"/>
    <property type="evidence" value="ECO:0007669"/>
    <property type="project" value="TreeGrafter"/>
</dbReference>
<dbReference type="GO" id="GO:0000978">
    <property type="term" value="F:RNA polymerase II cis-regulatory region sequence-specific DNA binding"/>
    <property type="evidence" value="ECO:0007669"/>
    <property type="project" value="TreeGrafter"/>
</dbReference>
<dbReference type="GO" id="GO:0007420">
    <property type="term" value="P:brain development"/>
    <property type="evidence" value="ECO:0007669"/>
    <property type="project" value="TreeGrafter"/>
</dbReference>
<dbReference type="GO" id="GO:0048593">
    <property type="term" value="P:camera-type eye morphogenesis"/>
    <property type="evidence" value="ECO:0007669"/>
    <property type="project" value="TreeGrafter"/>
</dbReference>
<dbReference type="GO" id="GO:0000122">
    <property type="term" value="P:negative regulation of transcription by RNA polymerase II"/>
    <property type="evidence" value="ECO:0007669"/>
    <property type="project" value="TreeGrafter"/>
</dbReference>
<dbReference type="GO" id="GO:0030182">
    <property type="term" value="P:neuron differentiation"/>
    <property type="evidence" value="ECO:0007669"/>
    <property type="project" value="TreeGrafter"/>
</dbReference>
<dbReference type="FunFam" id="1.10.30.10:FF:000002">
    <property type="entry name" value="transcription factor Sox-2"/>
    <property type="match status" value="1"/>
</dbReference>
<dbReference type="Gene3D" id="1.10.30.10">
    <property type="entry name" value="High mobility group box domain"/>
    <property type="match status" value="1"/>
</dbReference>
<dbReference type="InterPro" id="IPR009071">
    <property type="entry name" value="HMG_box_dom"/>
</dbReference>
<dbReference type="InterPro" id="IPR036910">
    <property type="entry name" value="HMG_box_dom_sf"/>
</dbReference>
<dbReference type="InterPro" id="IPR050140">
    <property type="entry name" value="SRY-related_HMG-box_TF-like"/>
</dbReference>
<dbReference type="PANTHER" id="PTHR10270">
    <property type="entry name" value="SOX TRANSCRIPTION FACTOR"/>
    <property type="match status" value="1"/>
</dbReference>
<dbReference type="PANTHER" id="PTHR10270:SF221">
    <property type="entry name" value="TRANSCRIPTION FACTOR SOX-12"/>
    <property type="match status" value="1"/>
</dbReference>
<dbReference type="Pfam" id="PF00505">
    <property type="entry name" value="HMG_box"/>
    <property type="match status" value="1"/>
</dbReference>
<dbReference type="SMART" id="SM00398">
    <property type="entry name" value="HMG"/>
    <property type="match status" value="1"/>
</dbReference>
<dbReference type="SUPFAM" id="SSF47095">
    <property type="entry name" value="HMG-box"/>
    <property type="match status" value="1"/>
</dbReference>
<dbReference type="PROSITE" id="PS50118">
    <property type="entry name" value="HMG_BOX_2"/>
    <property type="match status" value="1"/>
</dbReference>
<accession>P40653</accession>
<name>MG44_TARMA</name>
<evidence type="ECO:0000255" key="1">
    <source>
        <dbReference type="PROSITE-ProRule" id="PRU00267"/>
    </source>
</evidence>
<feature type="chain" id="PRO_0000048801" description="SRY-related protein MG44">
    <location>
        <begin position="1" status="less than"/>
        <end position="72" status="greater than"/>
    </location>
</feature>
<feature type="DNA-binding region" description="HMG box" evidence="1">
    <location>
        <begin position="1"/>
        <end position="69"/>
    </location>
</feature>
<feature type="non-terminal residue">
    <location>
        <position position="1"/>
    </location>
</feature>
<feature type="non-terminal residue">
    <location>
        <position position="72"/>
    </location>
</feature>
<reference key="1">
    <citation type="journal article" date="1993" name="PCR Methods Appl.">
        <title>PCR amplification of SRY-related gene sequences reveals evolutionary conservation of the SRY-box motif.</title>
        <authorList>
            <person name="Coriat A.M."/>
            <person name="Mueller U."/>
            <person name="Harry J.L."/>
            <person name="Uwanogho D."/>
            <person name="Sharpe P.T."/>
        </authorList>
    </citation>
    <scope>NUCLEOTIDE SEQUENCE [GENOMIC DNA]</scope>
</reference>
<keyword id="KW-0238">DNA-binding</keyword>
<keyword id="KW-0539">Nucleus</keyword>
<comment type="subcellular location">
    <subcellularLocation>
        <location evidence="1">Nucleus</location>
    </subcellularLocation>
</comment>
<protein>
    <recommendedName>
        <fullName>SRY-related protein MG44</fullName>
    </recommendedName>
</protein>
<organism>
    <name type="scientific">Tarentola mauritanica</name>
    <name type="common">Common wall gecko</name>
    <name type="synonym">Lacerta mauritanica</name>
    <dbReference type="NCBI Taxonomy" id="8569"/>
    <lineage>
        <taxon>Eukaryota</taxon>
        <taxon>Metazoa</taxon>
        <taxon>Chordata</taxon>
        <taxon>Craniata</taxon>
        <taxon>Vertebrata</taxon>
        <taxon>Euteleostomi</taxon>
        <taxon>Lepidosauria</taxon>
        <taxon>Squamata</taxon>
        <taxon>Bifurcata</taxon>
        <taxon>Gekkota</taxon>
        <taxon>Phyllodactylidae</taxon>
        <taxon>Tarentola</taxon>
    </lineage>
</organism>